<evidence type="ECO:0000250" key="1"/>
<evidence type="ECO:0000250" key="2">
    <source>
        <dbReference type="UniProtKB" id="P97690"/>
    </source>
</evidence>
<evidence type="ECO:0000250" key="3">
    <source>
        <dbReference type="UniProtKB" id="Q9CW03"/>
    </source>
</evidence>
<evidence type="ECO:0000250" key="4">
    <source>
        <dbReference type="UniProtKB" id="Q9UQE7"/>
    </source>
</evidence>
<evidence type="ECO:0000255" key="5"/>
<evidence type="ECO:0000256" key="6">
    <source>
        <dbReference type="SAM" id="MobiDB-lite"/>
    </source>
</evidence>
<evidence type="ECO:0000269" key="7">
    <source>
    </source>
</evidence>
<evidence type="ECO:0000269" key="8">
    <source>
    </source>
</evidence>
<evidence type="ECO:0000305" key="9"/>
<dbReference type="EMBL" id="AF072713">
    <property type="protein sequence ID" value="AAD13142.1"/>
    <property type="molecule type" value="mRNA"/>
</dbReference>
<dbReference type="RefSeq" id="NP_776720.1">
    <property type="nucleotide sequence ID" value="NM_174295.1"/>
</dbReference>
<dbReference type="BioGRID" id="159045">
    <property type="interactions" value="2"/>
</dbReference>
<dbReference type="FunCoup" id="O97594">
    <property type="interactions" value="1306"/>
</dbReference>
<dbReference type="STRING" id="9913.ENSBTAP00000043550"/>
<dbReference type="PaxDb" id="9913-ENSBTAP00000043550"/>
<dbReference type="GeneID" id="281729"/>
<dbReference type="KEGG" id="bta:281729"/>
<dbReference type="CTD" id="9126"/>
<dbReference type="eggNOG" id="KOG0964">
    <property type="taxonomic scope" value="Eukaryota"/>
</dbReference>
<dbReference type="InParanoid" id="O97594"/>
<dbReference type="OrthoDB" id="431497at2759"/>
<dbReference type="Proteomes" id="UP000009136">
    <property type="component" value="Unplaced"/>
</dbReference>
<dbReference type="GO" id="GO:0000785">
    <property type="term" value="C:chromatin"/>
    <property type="evidence" value="ECO:0000250"/>
    <property type="project" value="UniProtKB"/>
</dbReference>
<dbReference type="GO" id="GO:0000775">
    <property type="term" value="C:chromosome, centromeric region"/>
    <property type="evidence" value="ECO:0007669"/>
    <property type="project" value="UniProtKB-SubCell"/>
</dbReference>
<dbReference type="GO" id="GO:0030893">
    <property type="term" value="C:meiotic cohesin complex"/>
    <property type="evidence" value="ECO:0000250"/>
    <property type="project" value="UniProtKB"/>
</dbReference>
<dbReference type="GO" id="GO:0030892">
    <property type="term" value="C:mitotic cohesin complex"/>
    <property type="evidence" value="ECO:0000318"/>
    <property type="project" value="GO_Central"/>
</dbReference>
<dbReference type="GO" id="GO:0097431">
    <property type="term" value="C:mitotic spindle pole"/>
    <property type="evidence" value="ECO:0000250"/>
    <property type="project" value="UniProtKB"/>
</dbReference>
<dbReference type="GO" id="GO:0016363">
    <property type="term" value="C:nuclear matrix"/>
    <property type="evidence" value="ECO:0000250"/>
    <property type="project" value="UniProtKB"/>
</dbReference>
<dbReference type="GO" id="GO:0005524">
    <property type="term" value="F:ATP binding"/>
    <property type="evidence" value="ECO:0007669"/>
    <property type="project" value="UniProtKB-KW"/>
</dbReference>
<dbReference type="GO" id="GO:0016887">
    <property type="term" value="F:ATP hydrolysis activity"/>
    <property type="evidence" value="ECO:0007669"/>
    <property type="project" value="InterPro"/>
</dbReference>
<dbReference type="GO" id="GO:0003690">
    <property type="term" value="F:double-stranded DNA binding"/>
    <property type="evidence" value="ECO:0000318"/>
    <property type="project" value="GO_Central"/>
</dbReference>
<dbReference type="GO" id="GO:0070840">
    <property type="term" value="F:dynein complex binding"/>
    <property type="evidence" value="ECO:0000250"/>
    <property type="project" value="UniProtKB"/>
</dbReference>
<dbReference type="GO" id="GO:0051301">
    <property type="term" value="P:cell division"/>
    <property type="evidence" value="ECO:0007669"/>
    <property type="project" value="UniProtKB-KW"/>
</dbReference>
<dbReference type="GO" id="GO:0006281">
    <property type="term" value="P:DNA repair"/>
    <property type="evidence" value="ECO:0007669"/>
    <property type="project" value="UniProtKB-KW"/>
</dbReference>
<dbReference type="GO" id="GO:0051321">
    <property type="term" value="P:meiotic cell cycle"/>
    <property type="evidence" value="ECO:0000250"/>
    <property type="project" value="UniProtKB"/>
</dbReference>
<dbReference type="GO" id="GO:0007064">
    <property type="term" value="P:mitotic sister chromatid cohesion"/>
    <property type="evidence" value="ECO:0000318"/>
    <property type="project" value="GO_Central"/>
</dbReference>
<dbReference type="GO" id="GO:0006275">
    <property type="term" value="P:regulation of DNA replication"/>
    <property type="evidence" value="ECO:0000250"/>
    <property type="project" value="UniProtKB"/>
</dbReference>
<dbReference type="CDD" id="cd03272">
    <property type="entry name" value="ABC_SMC3_euk"/>
    <property type="match status" value="1"/>
</dbReference>
<dbReference type="FunFam" id="1.20.1060.20:FF:000002">
    <property type="entry name" value="Structural maintenance of chromosomes 3"/>
    <property type="match status" value="1"/>
</dbReference>
<dbReference type="FunFam" id="3.30.70.1620:FF:000002">
    <property type="entry name" value="Structural maintenance of chromosomes 3"/>
    <property type="match status" value="1"/>
</dbReference>
<dbReference type="FunFam" id="3.40.50.300:FF:000370">
    <property type="entry name" value="Structural maintenance of chromosomes 3"/>
    <property type="match status" value="1"/>
</dbReference>
<dbReference type="FunFam" id="3.40.50.300:FF:000424">
    <property type="entry name" value="Structural maintenance of chromosomes 3"/>
    <property type="match status" value="1"/>
</dbReference>
<dbReference type="Gene3D" id="1.10.287.1490">
    <property type="match status" value="1"/>
</dbReference>
<dbReference type="Gene3D" id="1.20.1060.20">
    <property type="match status" value="1"/>
</dbReference>
<dbReference type="Gene3D" id="3.30.70.1620">
    <property type="match status" value="1"/>
</dbReference>
<dbReference type="Gene3D" id="3.40.50.300">
    <property type="entry name" value="P-loop containing nucleotide triphosphate hydrolases"/>
    <property type="match status" value="2"/>
</dbReference>
<dbReference type="InterPro" id="IPR027417">
    <property type="entry name" value="P-loop_NTPase"/>
</dbReference>
<dbReference type="InterPro" id="IPR003395">
    <property type="entry name" value="RecF/RecN/SMC_N"/>
</dbReference>
<dbReference type="InterPro" id="IPR024704">
    <property type="entry name" value="SMC"/>
</dbReference>
<dbReference type="InterPro" id="IPR041741">
    <property type="entry name" value="SMC3_ABC_euk"/>
</dbReference>
<dbReference type="InterPro" id="IPR010935">
    <property type="entry name" value="SMC_hinge"/>
</dbReference>
<dbReference type="InterPro" id="IPR036277">
    <property type="entry name" value="SMC_hinge_sf"/>
</dbReference>
<dbReference type="PANTHER" id="PTHR43977">
    <property type="entry name" value="STRUCTURAL MAINTENANCE OF CHROMOSOMES PROTEIN 3"/>
    <property type="match status" value="1"/>
</dbReference>
<dbReference type="Pfam" id="PF06470">
    <property type="entry name" value="SMC_hinge"/>
    <property type="match status" value="1"/>
</dbReference>
<dbReference type="Pfam" id="PF02463">
    <property type="entry name" value="SMC_N"/>
    <property type="match status" value="1"/>
</dbReference>
<dbReference type="PIRSF" id="PIRSF005719">
    <property type="entry name" value="SMC"/>
    <property type="match status" value="1"/>
</dbReference>
<dbReference type="SMART" id="SM00968">
    <property type="entry name" value="SMC_hinge"/>
    <property type="match status" value="1"/>
</dbReference>
<dbReference type="SUPFAM" id="SSF52540">
    <property type="entry name" value="P-loop containing nucleoside triphosphate hydrolases"/>
    <property type="match status" value="1"/>
</dbReference>
<dbReference type="SUPFAM" id="SSF75553">
    <property type="entry name" value="Smc hinge domain"/>
    <property type="match status" value="1"/>
</dbReference>
<name>SMC3_BOVIN</name>
<sequence>MYIKQVIIQGFRSYRDQTIVDPFSSKHNVIVGRNGSGKSNFFYAIQFVLSDEFSHLRPEQRLALLHEGTGPRVISAFVEIIFDNSDNRLPIDKEEVSLRRVIGAKKDQYFLDKKMVTKNDVMNLLESAGFSRSNPYYIVKQGKINQMATAPDSQRLKLLREVAGTRVYDERKEESISLMKETEGKREKINELLKYIEERLHTLEEEKEELAQYQKWDKMRRALEYTIYNQELNETRAKLDELSAKRETSGEKSRQLRDAQQDARDKMEDIERQVRELKTKISAMKEEKEQLSAERQEQIKQRTKLELKAKDLQDELAGNSEQRKRLLKERQKLLEKIEEKQKELAETEPKFNSVKEKEERGIARLAQATQERTDLYAKQGRGSQFTSKEERDKWIKKELKSLDQAINDKKRQIAAIHKDLEDTEANKEKNLEQYNKLDQDLNEVKARVEELDRKYYEVKNKKDELQSERNYLWREENAEQQALAAKREDLEKKQQLLRAATGKAILNGIDSINKVLDHFRRKGINQHVQNGYHGIVMNNFECEPAFYTCVEVTAGNRLFYHIVDSDEVSTKILMEFNKMNLPGEVTFLPLNKLDVRDTAYPETNDAIPMISKLRYNPRFDKAFKHVFGKTLICRSMEVSTQLARAFTMDCITLEGDQVSHRGALTGGYYDTRKSRLELQKDVRKAEEELGELEAKLNENLRRNIERINNEIDQLMNQMQQIETQQRKFKASRDSILSEMKMLKEKRQQSEKTFMPKQRSLQSLEASLHAMESTRESLKAELGTDLLSQLSLEDQKRVDALNDEIRQLQQENRQLLNERIKLEGIITRVETYLNENLRKRLDQVEQELNELRETEGGTVLTATTSELEAINKRVKDTMARSEDLDNSIDKTEAGIKELQKSMERWKNMEKEHMDAINHDTKELEKMTNRQGMLLKKKEECMKKIRELGSLPQEAFEKYQTLSLKQLFRKLEQCNTELKKYSHVNKKALDQFVNFSEQKEKLIKRQEELDRGYKSIMELMNVLELRKYEAIQLTFKQVSKNFSEVFQKLVPGGKATLVMKKRRXERQSGLRMKEKGVVKGERGSGPQSSVPSVDQFTGVGIRVSFTGKQGEMREMQQLSGGQKSLVALALIFAIQKCDPAPFYLFDEIDQALDAQHRKAVSDMIMELAVHAQFITTTFRPELLESADKFYGVKFRNKVSHIDVITAEMAKDFVEDDTTHG</sequence>
<keyword id="KW-0007">Acetylation</keyword>
<keyword id="KW-0067">ATP-binding</keyword>
<keyword id="KW-0131">Cell cycle</keyword>
<keyword id="KW-0132">Cell division</keyword>
<keyword id="KW-0137">Centromere</keyword>
<keyword id="KW-0158">Chromosome</keyword>
<keyword id="KW-0175">Coiled coil</keyword>
<keyword id="KW-0227">DNA damage</keyword>
<keyword id="KW-0234">DNA repair</keyword>
<keyword id="KW-0469">Meiosis</keyword>
<keyword id="KW-0498">Mitosis</keyword>
<keyword id="KW-0547">Nucleotide-binding</keyword>
<keyword id="KW-0539">Nucleus</keyword>
<keyword id="KW-0597">Phosphoprotein</keyword>
<keyword id="KW-1185">Reference proteome</keyword>
<keyword id="KW-0832">Ubl conjugation</keyword>
<organism>
    <name type="scientific">Bos taurus</name>
    <name type="common">Bovine</name>
    <dbReference type="NCBI Taxonomy" id="9913"/>
    <lineage>
        <taxon>Eukaryota</taxon>
        <taxon>Metazoa</taxon>
        <taxon>Chordata</taxon>
        <taxon>Craniata</taxon>
        <taxon>Vertebrata</taxon>
        <taxon>Euteleostomi</taxon>
        <taxon>Mammalia</taxon>
        <taxon>Eutheria</taxon>
        <taxon>Laurasiatheria</taxon>
        <taxon>Artiodactyla</taxon>
        <taxon>Ruminantia</taxon>
        <taxon>Pecora</taxon>
        <taxon>Bovidae</taxon>
        <taxon>Bovinae</taxon>
        <taxon>Bos</taxon>
    </lineage>
</organism>
<protein>
    <recommendedName>
        <fullName>Structural maintenance of chromosomes protein 3</fullName>
        <shortName>SMC protein 3</shortName>
        <shortName>SMC-3</shortName>
    </recommendedName>
    <alternativeName>
        <fullName>Chondroitin sulfate proteoglycan 6</fullName>
    </alternativeName>
</protein>
<accession>O97594</accession>
<gene>
    <name type="primary">SMC3</name>
    <name type="synonym">CSPG6</name>
    <name type="synonym">SMC3L1</name>
</gene>
<reference key="1">
    <citation type="journal article" date="1999" name="Gene">
        <title>Cloning and characterization of mammalian SMC1 and SMC3 genes and proteins, components of the DNA recombination complexes RC-1.</title>
        <authorList>
            <person name="Stursberg S."/>
            <person name="Riwar B."/>
            <person name="Jessberger R."/>
        </authorList>
    </citation>
    <scope>NUCLEOTIDE SEQUENCE [MRNA]</scope>
    <scope>CHARACTERIZATION</scope>
    <scope>INTERACTION WITH SMC1A</scope>
</reference>
<reference key="2">
    <citation type="journal article" date="2005" name="J. Biol. Chem.">
        <title>RPGR-ORF15, which is mutated in retinitis pigmentosa, associates with SMC1, SMC3, and microtubule transport proteins.</title>
        <authorList>
            <person name="Khanna H."/>
            <person name="Hurd T.W."/>
            <person name="Lillo C."/>
            <person name="Shu X."/>
            <person name="Parapuram S.K."/>
            <person name="He S."/>
            <person name="Akimoto M."/>
            <person name="Wright A.F."/>
            <person name="Margolis B."/>
            <person name="Williams D.S."/>
            <person name="Swaroop A."/>
        </authorList>
    </citation>
    <scope>INTERACTION WITH RPGR</scope>
</reference>
<comment type="function">
    <text>Central component of cohesin, a complex required for chromosome cohesion during the cell cycle. The cohesin complex may form a large proteinaceous ring within which sister chromatids can be trapped. At anaphase, the complex is cleaved and dissociates from chromatin, allowing sister chromatids to segregate. Cohesion is coupled to DNA replication and is involved in DNA repair. The cohesin complex also plays an important role in spindle pole assembly during mitosis and in chromosomes movement.</text>
</comment>
<comment type="subunit">
    <text evidence="2 3 4 7 8">Forms a heterodimer with SMC1A or SMC1B in cohesin complexes (PubMed:10072753). Cohesin complexes are composed of the SMC1 (SMC1A or meiosis-specific SMC1B) and SMC3 heterodimer attached via their SMC hinge domain, RAD21 which link them, and one STAG protein (STAG1, STAG2 or STAG3), which interacts with RAD21. Also found in meiosis-specific cohesin complexes. Found in a complex with SMC1A, CDCA5 and RAD21, PDS5A/SCC-112 and PDS5B/APRIN. Interacts with MXI1, MXD3 and MXD4. Interacts with NUMA1, and forms a ternary complex with KIF3B and KIFAP3, suggesting a function in tethering the chromosomes to the spindle pole and a function in chromosome movement. Interacts with PDS5A and WAPL; regulated by SMC3 acetylation. Interacts (via SMC hinge domain) with KIAA1328 (via N- and C-terminal domains). Interacts with DDX11, SYCP2 and STAG3. The cohesin complex interacts with the cohesin loading complex subunits NIPBL/Scc2 (via HEAT repeats) and MAU2/Scc4. NIPBL directly contacts all members of the complex, RAD21, SMC1A/B, SMC3 and STAG1 (By similarity). Interacts with RPGR (PubMed:16043481). Interacts with the NuRD complex component HDAC2; the interaction is direct (By similarity).</text>
</comment>
<comment type="subcellular location">
    <subcellularLocation>
        <location evidence="3">Nucleus</location>
    </subcellularLocation>
    <subcellularLocation>
        <location evidence="3">Chromosome</location>
    </subcellularLocation>
    <subcellularLocation>
        <location evidence="3">Chromosome</location>
        <location evidence="3">Centromere</location>
    </subcellularLocation>
    <text evidence="3">Associates with chromatin. Before prophase it is scattered along chromosome arms. During prophase, most of cohesin complexes dissociate from chromatin probably because of phosphorylation by PLK, except at centromeres, where cohesin complexes remain. At anaphase, the RAD21 subunit of the cohesin complex is cleaved, leading to the dissociation of the complex from chromosomes, allowing chromosome separation. The phosphorylated form at Ser-1082 is preferentially associated with unsynapsed chromosomal regions (By similarity).</text>
</comment>
<comment type="domain">
    <text evidence="1">The flexible SMC hinge domain, which separates the large intramolecular coiled coil regions, allows the heterotypic interaction with the corresponding domain of SMC1A or SMC1B, forming a V-shaped heterodimer. The two heads of the heterodimer are then connected by different ends of the cleavable RAD21 protein, forming a ring structure (By similarity).</text>
</comment>
<comment type="PTM">
    <text evidence="3">Phosphorylated at Ser-1082 in a SPO11-dependent manner.</text>
</comment>
<comment type="PTM">
    <text evidence="4">Acetylation at Lys-105 and Lys-106 by ESCO1 is important for genome stability and S phase sister chromatid cohesion. Regulated by DSCC1, it is required for processive DNA synthesis, coupling sister chromatid cohesion establishment during S phase to DNA replication (By similarity). Deacetylation by HDAC8, regulates release of the cohesin complex from chromatin (By similarity).</text>
</comment>
<comment type="PTM">
    <text evidence="4">Ubiquitinated by the DCX(DCAF15) complex, leading to its degradation.</text>
</comment>
<comment type="similarity">
    <text evidence="9">Belongs to the SMC family. SMC3 subfamily.</text>
</comment>
<comment type="caution">
    <text evidence="9">Was originally isolated as a proteoglycan protein (explaining its name). Although not excluded, such secreted function is not clear.</text>
</comment>
<feature type="chain" id="PRO_0000119000" description="Structural maintenance of chromosomes protein 3">
    <location>
        <begin position="1"/>
        <end position="1218"/>
    </location>
</feature>
<feature type="domain" description="SMC hinge">
    <location>
        <begin position="530"/>
        <end position="642"/>
    </location>
</feature>
<feature type="region of interest" description="Disordered" evidence="6">
    <location>
        <begin position="242"/>
        <end position="268"/>
    </location>
</feature>
<feature type="region of interest" description="Disordered" evidence="6">
    <location>
        <begin position="1067"/>
        <end position="1089"/>
    </location>
</feature>
<feature type="coiled-coil region" evidence="5">
    <location>
        <begin position="179"/>
        <end position="350"/>
    </location>
</feature>
<feature type="coiled-coil region" evidence="5">
    <location>
        <begin position="393"/>
        <end position="503"/>
    </location>
</feature>
<feature type="coiled-coil region" evidence="5">
    <location>
        <begin position="669"/>
        <end position="916"/>
    </location>
</feature>
<feature type="coiled-coil region" evidence="5">
    <location>
        <begin position="958"/>
        <end position="989"/>
    </location>
</feature>
<feature type="compositionally biased region" description="Basic and acidic residues" evidence="6">
    <location>
        <begin position="1067"/>
        <end position="1080"/>
    </location>
</feature>
<feature type="binding site" evidence="5">
    <location>
        <begin position="32"/>
        <end position="39"/>
    </location>
    <ligand>
        <name>ATP</name>
        <dbReference type="ChEBI" id="CHEBI:30616"/>
    </ligand>
</feature>
<feature type="modified residue" description="N6-acetyllysine" evidence="4">
    <location>
        <position position="105"/>
    </location>
</feature>
<feature type="modified residue" description="N6-acetyllysine" evidence="4">
    <location>
        <position position="106"/>
    </location>
</feature>
<feature type="modified residue" description="N6-acetyllysine" evidence="4">
    <location>
        <position position="140"/>
    </location>
</feature>
<feature type="modified residue" description="Phosphothreonine" evidence="4">
    <location>
        <position position="783"/>
    </location>
</feature>
<feature type="modified residue" description="Phosphoserine" evidence="4">
    <location>
        <position position="787"/>
    </location>
</feature>
<feature type="modified residue" description="Phosphoserine" evidence="4">
    <location>
        <position position="886"/>
    </location>
</feature>
<feature type="modified residue" description="Phosphoserine" evidence="3">
    <location>
        <position position="1013"/>
    </location>
</feature>
<feature type="modified residue" description="N6-acetyllysine" evidence="4">
    <location>
        <position position="1191"/>
    </location>
</feature>
<proteinExistence type="evidence at protein level"/>